<feature type="chain" id="PRO_0000365659" description="Adenylate kinase">
    <location>
        <begin position="1"/>
        <end position="257"/>
    </location>
</feature>
<feature type="region of interest" description="NMP" evidence="1">
    <location>
        <begin position="72"/>
        <end position="101"/>
    </location>
</feature>
<feature type="region of interest" description="LID" evidence="1">
    <location>
        <begin position="169"/>
        <end position="206"/>
    </location>
</feature>
<feature type="binding site" evidence="1">
    <location>
        <begin position="52"/>
        <end position="57"/>
    </location>
    <ligand>
        <name>ATP</name>
        <dbReference type="ChEBI" id="CHEBI:30616"/>
    </ligand>
</feature>
<feature type="binding site" evidence="1">
    <location>
        <position position="73"/>
    </location>
    <ligand>
        <name>AMP</name>
        <dbReference type="ChEBI" id="CHEBI:456215"/>
    </ligand>
</feature>
<feature type="binding site" evidence="1">
    <location>
        <position position="78"/>
    </location>
    <ligand>
        <name>AMP</name>
        <dbReference type="ChEBI" id="CHEBI:456215"/>
    </ligand>
</feature>
<feature type="binding site" evidence="1">
    <location>
        <begin position="99"/>
        <end position="101"/>
    </location>
    <ligand>
        <name>AMP</name>
        <dbReference type="ChEBI" id="CHEBI:456215"/>
    </ligand>
</feature>
<feature type="binding site" evidence="1">
    <location>
        <begin position="128"/>
        <end position="131"/>
    </location>
    <ligand>
        <name>AMP</name>
        <dbReference type="ChEBI" id="CHEBI:456215"/>
    </ligand>
</feature>
<feature type="binding site" evidence="1">
    <location>
        <position position="135"/>
    </location>
    <ligand>
        <name>AMP</name>
        <dbReference type="ChEBI" id="CHEBI:456215"/>
    </ligand>
</feature>
<feature type="binding site" evidence="1">
    <location>
        <position position="170"/>
    </location>
    <ligand>
        <name>ATP</name>
        <dbReference type="ChEBI" id="CHEBI:30616"/>
    </ligand>
</feature>
<feature type="binding site" evidence="1">
    <location>
        <begin position="179"/>
        <end position="180"/>
    </location>
    <ligand>
        <name>ATP</name>
        <dbReference type="ChEBI" id="CHEBI:30616"/>
    </ligand>
</feature>
<feature type="binding site" evidence="1">
    <location>
        <position position="203"/>
    </location>
    <ligand>
        <name>AMP</name>
        <dbReference type="ChEBI" id="CHEBI:456215"/>
    </ligand>
</feature>
<feature type="binding site" evidence="1">
    <location>
        <position position="214"/>
    </location>
    <ligand>
        <name>AMP</name>
        <dbReference type="ChEBI" id="CHEBI:456215"/>
    </ligand>
</feature>
<feature type="binding site" evidence="1">
    <location>
        <position position="242"/>
    </location>
    <ligand>
        <name>ATP</name>
        <dbReference type="ChEBI" id="CHEBI:30616"/>
    </ligand>
</feature>
<reference key="1">
    <citation type="journal article" date="2008" name="PLoS Genet.">
        <title>Genomic islands in the pathogenic filamentous fungus Aspergillus fumigatus.</title>
        <authorList>
            <person name="Fedorova N.D."/>
            <person name="Khaldi N."/>
            <person name="Joardar V.S."/>
            <person name="Maiti R."/>
            <person name="Amedeo P."/>
            <person name="Anderson M.J."/>
            <person name="Crabtree J."/>
            <person name="Silva J.C."/>
            <person name="Badger J.H."/>
            <person name="Albarraq A."/>
            <person name="Angiuoli S."/>
            <person name="Bussey H."/>
            <person name="Bowyer P."/>
            <person name="Cotty P.J."/>
            <person name="Dyer P.S."/>
            <person name="Egan A."/>
            <person name="Galens K."/>
            <person name="Fraser-Liggett C.M."/>
            <person name="Haas B.J."/>
            <person name="Inman J.M."/>
            <person name="Kent R."/>
            <person name="Lemieux S."/>
            <person name="Malavazi I."/>
            <person name="Orvis J."/>
            <person name="Roemer T."/>
            <person name="Ronning C.M."/>
            <person name="Sundaram J.P."/>
            <person name="Sutton G."/>
            <person name="Turner G."/>
            <person name="Venter J.C."/>
            <person name="White O.R."/>
            <person name="Whitty B.R."/>
            <person name="Youngman P."/>
            <person name="Wolfe K.H."/>
            <person name="Goldman G.H."/>
            <person name="Wortman J.R."/>
            <person name="Jiang B."/>
            <person name="Denning D.W."/>
            <person name="Nierman W.C."/>
        </authorList>
    </citation>
    <scope>NUCLEOTIDE SEQUENCE [LARGE SCALE GENOMIC DNA]</scope>
    <source>
        <strain>ATCC 1007 / CBS 513.65 / DSM 816 / NCTC 3887 / NRRL 1 / QM 1276 / 107</strain>
    </source>
</reference>
<keyword id="KW-0067">ATP-binding</keyword>
<keyword id="KW-0963">Cytoplasm</keyword>
<keyword id="KW-0418">Kinase</keyword>
<keyword id="KW-0496">Mitochondrion</keyword>
<keyword id="KW-0547">Nucleotide-binding</keyword>
<keyword id="KW-1185">Reference proteome</keyword>
<keyword id="KW-0808">Transferase</keyword>
<dbReference type="EC" id="2.7.4.3" evidence="1"/>
<dbReference type="EMBL" id="DS027059">
    <property type="protein sequence ID" value="EAW07986.1"/>
    <property type="molecule type" value="Genomic_DNA"/>
</dbReference>
<dbReference type="RefSeq" id="XP_001269412.1">
    <property type="nucleotide sequence ID" value="XM_001269411.1"/>
</dbReference>
<dbReference type="SMR" id="A1CQR5"/>
<dbReference type="STRING" id="344612.A1CQR5"/>
<dbReference type="EnsemblFungi" id="EAW07986">
    <property type="protein sequence ID" value="EAW07986"/>
    <property type="gene ID" value="ACLA_027080"/>
</dbReference>
<dbReference type="GeneID" id="4701899"/>
<dbReference type="KEGG" id="act:ACLA_027080"/>
<dbReference type="VEuPathDB" id="FungiDB:ACLA_027080"/>
<dbReference type="eggNOG" id="KOG3078">
    <property type="taxonomic scope" value="Eukaryota"/>
</dbReference>
<dbReference type="HOGENOM" id="CLU_032354_1_0_1"/>
<dbReference type="OMA" id="VYHEQTA"/>
<dbReference type="OrthoDB" id="439792at2759"/>
<dbReference type="Proteomes" id="UP000006701">
    <property type="component" value="Unassembled WGS sequence"/>
</dbReference>
<dbReference type="GO" id="GO:0005829">
    <property type="term" value="C:cytosol"/>
    <property type="evidence" value="ECO:0007669"/>
    <property type="project" value="UniProtKB-SubCell"/>
</dbReference>
<dbReference type="GO" id="GO:0005758">
    <property type="term" value="C:mitochondrial intermembrane space"/>
    <property type="evidence" value="ECO:0007669"/>
    <property type="project" value="UniProtKB-SubCell"/>
</dbReference>
<dbReference type="GO" id="GO:0004017">
    <property type="term" value="F:adenylate kinase activity"/>
    <property type="evidence" value="ECO:0007669"/>
    <property type="project" value="UniProtKB-UniRule"/>
</dbReference>
<dbReference type="GO" id="GO:0016208">
    <property type="term" value="F:AMP binding"/>
    <property type="evidence" value="ECO:0007669"/>
    <property type="project" value="EnsemblFungi"/>
</dbReference>
<dbReference type="GO" id="GO:0005524">
    <property type="term" value="F:ATP binding"/>
    <property type="evidence" value="ECO:0007669"/>
    <property type="project" value="UniProtKB-KW"/>
</dbReference>
<dbReference type="GO" id="GO:0003688">
    <property type="term" value="F:DNA replication origin binding"/>
    <property type="evidence" value="ECO:0007669"/>
    <property type="project" value="EnsemblFungi"/>
</dbReference>
<dbReference type="GO" id="GO:0006172">
    <property type="term" value="P:ADP biosynthetic process"/>
    <property type="evidence" value="ECO:0007669"/>
    <property type="project" value="UniProtKB-UniRule"/>
</dbReference>
<dbReference type="GO" id="GO:0046033">
    <property type="term" value="P:AMP metabolic process"/>
    <property type="evidence" value="ECO:0007669"/>
    <property type="project" value="UniProtKB-UniRule"/>
</dbReference>
<dbReference type="GO" id="GO:0046034">
    <property type="term" value="P:ATP metabolic process"/>
    <property type="evidence" value="ECO:0007669"/>
    <property type="project" value="UniProtKB-UniRule"/>
</dbReference>
<dbReference type="GO" id="GO:0006270">
    <property type="term" value="P:DNA replication initiation"/>
    <property type="evidence" value="ECO:0007669"/>
    <property type="project" value="EnsemblFungi"/>
</dbReference>
<dbReference type="GO" id="GO:0036388">
    <property type="term" value="P:pre-replicative complex assembly"/>
    <property type="evidence" value="ECO:0007669"/>
    <property type="project" value="EnsemblFungi"/>
</dbReference>
<dbReference type="CDD" id="cd01428">
    <property type="entry name" value="ADK"/>
    <property type="match status" value="1"/>
</dbReference>
<dbReference type="FunFam" id="3.40.50.300:FF:000106">
    <property type="entry name" value="Adenylate kinase mitochondrial"/>
    <property type="match status" value="1"/>
</dbReference>
<dbReference type="Gene3D" id="3.40.50.300">
    <property type="entry name" value="P-loop containing nucleotide triphosphate hydrolases"/>
    <property type="match status" value="1"/>
</dbReference>
<dbReference type="HAMAP" id="MF_00235">
    <property type="entry name" value="Adenylate_kinase_Adk"/>
    <property type="match status" value="1"/>
</dbReference>
<dbReference type="HAMAP" id="MF_03168">
    <property type="entry name" value="Adenylate_kinase_AK2"/>
    <property type="match status" value="1"/>
</dbReference>
<dbReference type="InterPro" id="IPR006259">
    <property type="entry name" value="Adenyl_kin_sub"/>
</dbReference>
<dbReference type="InterPro" id="IPR000850">
    <property type="entry name" value="Adenylat/UMP-CMP_kin"/>
</dbReference>
<dbReference type="InterPro" id="IPR033690">
    <property type="entry name" value="Adenylat_kinase_CS"/>
</dbReference>
<dbReference type="InterPro" id="IPR007862">
    <property type="entry name" value="Adenylate_kinase_lid-dom"/>
</dbReference>
<dbReference type="InterPro" id="IPR028587">
    <property type="entry name" value="AK2"/>
</dbReference>
<dbReference type="InterPro" id="IPR027417">
    <property type="entry name" value="P-loop_NTPase"/>
</dbReference>
<dbReference type="NCBIfam" id="TIGR01351">
    <property type="entry name" value="adk"/>
    <property type="match status" value="1"/>
</dbReference>
<dbReference type="NCBIfam" id="NF001380">
    <property type="entry name" value="PRK00279.1-2"/>
    <property type="match status" value="1"/>
</dbReference>
<dbReference type="NCBIfam" id="NF001381">
    <property type="entry name" value="PRK00279.1-3"/>
    <property type="match status" value="1"/>
</dbReference>
<dbReference type="NCBIfam" id="NF011100">
    <property type="entry name" value="PRK14527.1"/>
    <property type="match status" value="1"/>
</dbReference>
<dbReference type="PANTHER" id="PTHR23359">
    <property type="entry name" value="NUCLEOTIDE KINASE"/>
    <property type="match status" value="1"/>
</dbReference>
<dbReference type="Pfam" id="PF00406">
    <property type="entry name" value="ADK"/>
    <property type="match status" value="1"/>
</dbReference>
<dbReference type="Pfam" id="PF05191">
    <property type="entry name" value="ADK_lid"/>
    <property type="match status" value="1"/>
</dbReference>
<dbReference type="PRINTS" id="PR00094">
    <property type="entry name" value="ADENYLTKNASE"/>
</dbReference>
<dbReference type="SUPFAM" id="SSF52540">
    <property type="entry name" value="P-loop containing nucleoside triphosphate hydrolases"/>
    <property type="match status" value="1"/>
</dbReference>
<dbReference type="PROSITE" id="PS00113">
    <property type="entry name" value="ADENYLATE_KINASE"/>
    <property type="match status" value="1"/>
</dbReference>
<name>KAD2_ASPCL</name>
<sequence>MAPITDEAVNGLKDMIGKLEARVQELEGRLVGDLKPKSTAEQMRIILMGPPGAGKGTQAPRLKEKYCVCHLATGDMLRSQVAKKTELGKEAKKIMDQGGLVSDEIMVNMIKSELETNSECKNGFILDGFPRTVAQAERLDDMLEARKQKLQHAVELQIDDALLVARITGRLVHPASGRSYHKIFNPPKNEMLDDITGEPLIQRSDDNAETLKKRLSTYHAQTAPVVDYYKKTGIWRGIDASQEPGQVWKSLLGVFQK</sequence>
<organism>
    <name type="scientific">Aspergillus clavatus (strain ATCC 1007 / CBS 513.65 / DSM 816 / NCTC 3887 / NRRL 1 / QM 1276 / 107)</name>
    <dbReference type="NCBI Taxonomy" id="344612"/>
    <lineage>
        <taxon>Eukaryota</taxon>
        <taxon>Fungi</taxon>
        <taxon>Dikarya</taxon>
        <taxon>Ascomycota</taxon>
        <taxon>Pezizomycotina</taxon>
        <taxon>Eurotiomycetes</taxon>
        <taxon>Eurotiomycetidae</taxon>
        <taxon>Eurotiales</taxon>
        <taxon>Aspergillaceae</taxon>
        <taxon>Aspergillus</taxon>
        <taxon>Aspergillus subgen. Fumigati</taxon>
    </lineage>
</organism>
<evidence type="ECO:0000255" key="1">
    <source>
        <dbReference type="HAMAP-Rule" id="MF_03168"/>
    </source>
</evidence>
<comment type="function">
    <text evidence="1">Catalyzes the reversible transfer of the terminal phosphate group between ATP and AMP. Plays an important role in cellular energy homeostasis and in adenine nucleotide metabolism. Adenylate kinase activity is critical for regulation of the phosphate utilization and the AMP de novo biosynthesis pathways.</text>
</comment>
<comment type="catalytic activity">
    <reaction evidence="1">
        <text>AMP + ATP = 2 ADP</text>
        <dbReference type="Rhea" id="RHEA:12973"/>
        <dbReference type="ChEBI" id="CHEBI:30616"/>
        <dbReference type="ChEBI" id="CHEBI:456215"/>
        <dbReference type="ChEBI" id="CHEBI:456216"/>
        <dbReference type="EC" id="2.7.4.3"/>
    </reaction>
</comment>
<comment type="subunit">
    <text evidence="1">Monomer.</text>
</comment>
<comment type="subcellular location">
    <subcellularLocation>
        <location evidence="1">Cytoplasm</location>
        <location evidence="1">Cytosol</location>
    </subcellularLocation>
    <subcellularLocation>
        <location evidence="1">Mitochondrion intermembrane space</location>
    </subcellularLocation>
    <text evidence="1">Predominantly mitochondrial.</text>
</comment>
<comment type="domain">
    <text evidence="1">Consists of three domains, a large central CORE domain and two small peripheral domains, NMPbind and LID, which undergo movements during catalysis. The LID domain closes over the site of phosphoryl transfer upon ATP binding. Assembling and dissambling the active center during each catalytic cycle provides an effective means to prevent ATP hydrolysis.</text>
</comment>
<comment type="similarity">
    <text evidence="1">Belongs to the adenylate kinase family. AK2 subfamily.</text>
</comment>
<accession>A1CQR5</accession>
<protein>
    <recommendedName>
        <fullName evidence="1">Adenylate kinase</fullName>
        <ecNumber evidence="1">2.7.4.3</ecNumber>
    </recommendedName>
    <alternativeName>
        <fullName evidence="1">ATP-AMP transphosphorylase</fullName>
    </alternativeName>
    <alternativeName>
        <fullName evidence="1">ATP:AMP phosphotransferase</fullName>
    </alternativeName>
    <alternativeName>
        <fullName evidence="1">Adenylate kinase cytosolic and mitochondrial</fullName>
    </alternativeName>
    <alternativeName>
        <fullName evidence="1">Adenylate monophosphate kinase</fullName>
    </alternativeName>
</protein>
<proteinExistence type="inferred from homology"/>
<gene>
    <name type="primary">adk1</name>
    <name type="ORF">ACLA_027080</name>
</gene>